<proteinExistence type="inferred from homology"/>
<protein>
    <recommendedName>
        <fullName evidence="3">Small ribosomal subunit protein uS4c</fullName>
    </recommendedName>
    <alternativeName>
        <fullName>30S ribosomal protein S4, chloroplastic</fullName>
    </alternativeName>
</protein>
<organism>
    <name type="scientific">Psilotum nudum</name>
    <name type="common">Whisk fern</name>
    <name type="synonym">Lycopodium nudum</name>
    <dbReference type="NCBI Taxonomy" id="3240"/>
    <lineage>
        <taxon>Eukaryota</taxon>
        <taxon>Viridiplantae</taxon>
        <taxon>Streptophyta</taxon>
        <taxon>Embryophyta</taxon>
        <taxon>Tracheophyta</taxon>
        <taxon>Polypodiopsida</taxon>
        <taxon>Ophioglossidae</taxon>
        <taxon>Psilotales</taxon>
        <taxon>Psilotaceae</taxon>
        <taxon>Psilotum</taxon>
    </lineage>
</organism>
<accession>Q95CA6</accession>
<accession>Q8WI16</accession>
<comment type="function">
    <text evidence="1">One of the primary rRNA binding proteins, it binds directly to 16S rRNA where it nucleates assembly of the body of the 30S subunit.</text>
</comment>
<comment type="function">
    <text evidence="1">With S5 and S12 plays an important role in translational accuracy.</text>
</comment>
<comment type="subunit">
    <text evidence="1">Part of the 30S ribosomal subunit. Contacts protein S5. The interaction surface between S4 and S5 is involved in control of translational fidelity (By similarity).</text>
</comment>
<comment type="subcellular location">
    <subcellularLocation>
        <location>Plastid</location>
        <location>Chloroplast</location>
    </subcellularLocation>
</comment>
<comment type="similarity">
    <text evidence="3">Belongs to the universal ribosomal protein uS4 family.</text>
</comment>
<comment type="sequence caution" evidence="3">
    <conflict type="erroneous initiation">
        <sequence resource="EMBL-CDS" id="AAL26195"/>
    </conflict>
</comment>
<feature type="chain" id="PRO_0000132658" description="Small ribosomal subunit protein uS4c">
    <location>
        <begin position="1"/>
        <end position="199"/>
    </location>
</feature>
<feature type="domain" description="S4 RNA-binding">
    <location>
        <begin position="84"/>
        <end position="146"/>
    </location>
</feature>
<feature type="region of interest" description="Disordered" evidence="2">
    <location>
        <begin position="1"/>
        <end position="35"/>
    </location>
</feature>
<feature type="compositionally biased region" description="Basic and acidic residues" evidence="2">
    <location>
        <begin position="1"/>
        <end position="24"/>
    </location>
</feature>
<geneLocation type="chloroplast"/>
<keyword id="KW-0150">Chloroplast</keyword>
<keyword id="KW-0934">Plastid</keyword>
<keyword id="KW-0687">Ribonucleoprotein</keyword>
<keyword id="KW-0689">Ribosomal protein</keyword>
<keyword id="KW-0694">RNA-binding</keyword>
<keyword id="KW-0699">rRNA-binding</keyword>
<dbReference type="EMBL" id="AF313588">
    <property type="protein sequence ID" value="AAL26195.1"/>
    <property type="status" value="ALT_INIT"/>
    <property type="molecule type" value="Genomic_DNA"/>
</dbReference>
<dbReference type="EMBL" id="AP004638">
    <property type="protein sequence ID" value="BAB84218.1"/>
    <property type="molecule type" value="Genomic_DNA"/>
</dbReference>
<dbReference type="RefSeq" id="NP_569631.1">
    <property type="nucleotide sequence ID" value="NC_003386.1"/>
</dbReference>
<dbReference type="SMR" id="Q95CA6"/>
<dbReference type="GeneID" id="2545177"/>
<dbReference type="GO" id="GO:0009507">
    <property type="term" value="C:chloroplast"/>
    <property type="evidence" value="ECO:0007669"/>
    <property type="project" value="UniProtKB-SubCell"/>
</dbReference>
<dbReference type="GO" id="GO:0015935">
    <property type="term" value="C:small ribosomal subunit"/>
    <property type="evidence" value="ECO:0007669"/>
    <property type="project" value="InterPro"/>
</dbReference>
<dbReference type="GO" id="GO:0019843">
    <property type="term" value="F:rRNA binding"/>
    <property type="evidence" value="ECO:0007669"/>
    <property type="project" value="UniProtKB-UniRule"/>
</dbReference>
<dbReference type="GO" id="GO:0003735">
    <property type="term" value="F:structural constituent of ribosome"/>
    <property type="evidence" value="ECO:0007669"/>
    <property type="project" value="InterPro"/>
</dbReference>
<dbReference type="GO" id="GO:0042274">
    <property type="term" value="P:ribosomal small subunit biogenesis"/>
    <property type="evidence" value="ECO:0007669"/>
    <property type="project" value="TreeGrafter"/>
</dbReference>
<dbReference type="GO" id="GO:0006412">
    <property type="term" value="P:translation"/>
    <property type="evidence" value="ECO:0007669"/>
    <property type="project" value="UniProtKB-UniRule"/>
</dbReference>
<dbReference type="CDD" id="cd00165">
    <property type="entry name" value="S4"/>
    <property type="match status" value="1"/>
</dbReference>
<dbReference type="FunFam" id="3.10.290.10:FF:000081">
    <property type="entry name" value="30S ribosomal protein S4, chloroplastic"/>
    <property type="match status" value="1"/>
</dbReference>
<dbReference type="Gene3D" id="1.10.1050.10">
    <property type="entry name" value="Ribosomal Protein S4 Delta 41, Chain A, domain 1"/>
    <property type="match status" value="1"/>
</dbReference>
<dbReference type="Gene3D" id="3.10.290.10">
    <property type="entry name" value="RNA-binding S4 domain"/>
    <property type="match status" value="1"/>
</dbReference>
<dbReference type="HAMAP" id="MF_01306_B">
    <property type="entry name" value="Ribosomal_uS4_B"/>
    <property type="match status" value="1"/>
</dbReference>
<dbReference type="InterPro" id="IPR022801">
    <property type="entry name" value="Ribosomal_uS4"/>
</dbReference>
<dbReference type="InterPro" id="IPR005709">
    <property type="entry name" value="Ribosomal_uS4_bac-type"/>
</dbReference>
<dbReference type="InterPro" id="IPR018079">
    <property type="entry name" value="Ribosomal_uS4_CS"/>
</dbReference>
<dbReference type="InterPro" id="IPR001912">
    <property type="entry name" value="Ribosomal_uS4_N"/>
</dbReference>
<dbReference type="InterPro" id="IPR002942">
    <property type="entry name" value="S4_RNA-bd"/>
</dbReference>
<dbReference type="InterPro" id="IPR036986">
    <property type="entry name" value="S4_RNA-bd_sf"/>
</dbReference>
<dbReference type="NCBIfam" id="NF003717">
    <property type="entry name" value="PRK05327.1"/>
    <property type="match status" value="1"/>
</dbReference>
<dbReference type="NCBIfam" id="TIGR01017">
    <property type="entry name" value="rpsD_bact"/>
    <property type="match status" value="1"/>
</dbReference>
<dbReference type="PANTHER" id="PTHR11831">
    <property type="entry name" value="30S 40S RIBOSOMAL PROTEIN"/>
    <property type="match status" value="1"/>
</dbReference>
<dbReference type="PANTHER" id="PTHR11831:SF4">
    <property type="entry name" value="SMALL RIBOSOMAL SUBUNIT PROTEIN US4M"/>
    <property type="match status" value="1"/>
</dbReference>
<dbReference type="Pfam" id="PF00163">
    <property type="entry name" value="Ribosomal_S4"/>
    <property type="match status" value="1"/>
</dbReference>
<dbReference type="Pfam" id="PF01479">
    <property type="entry name" value="S4"/>
    <property type="match status" value="1"/>
</dbReference>
<dbReference type="SMART" id="SM01390">
    <property type="entry name" value="Ribosomal_S4"/>
    <property type="match status" value="1"/>
</dbReference>
<dbReference type="SMART" id="SM00363">
    <property type="entry name" value="S4"/>
    <property type="match status" value="1"/>
</dbReference>
<dbReference type="SUPFAM" id="SSF55174">
    <property type="entry name" value="Alpha-L RNA-binding motif"/>
    <property type="match status" value="1"/>
</dbReference>
<dbReference type="PROSITE" id="PS00632">
    <property type="entry name" value="RIBOSOMAL_S4"/>
    <property type="match status" value="1"/>
</dbReference>
<dbReference type="PROSITE" id="PS50889">
    <property type="entry name" value="S4"/>
    <property type="match status" value="1"/>
</dbReference>
<sequence length="199" mass="22911">MESDQSKVESDQSKMESDQSKVESDQSISQSTSKKRSQYSLRLEAKQRLRFNYGVTERQLLKYVCIAKKARGSTGQVLLQLLEMRLDNIIFRLGLSPTIPGARQLVNHRHILVNDQIVDIPSYRCKPNDIITVRDHQKSQELIKRNIKLAKIDEIPSHLNISYLEETKPKGFINKIVDRGSIGLEINELLVVEYYSRQA</sequence>
<evidence type="ECO:0000250" key="1"/>
<evidence type="ECO:0000256" key="2">
    <source>
        <dbReference type="SAM" id="MobiDB-lite"/>
    </source>
</evidence>
<evidence type="ECO:0000305" key="3"/>
<gene>
    <name type="primary">rps4</name>
</gene>
<name>RR4_PSINU</name>
<reference key="1">
    <citation type="journal article" date="2001" name="Nature">
        <title>Horsetails and ferns are a monophyletic group and the closest living relatives to seed plants.</title>
        <authorList>
            <person name="Pryer K.M."/>
            <person name="Schneider H."/>
            <person name="Smith A.R."/>
            <person name="Cranfill R."/>
            <person name="Wolf P.G."/>
            <person name="Hunt J.S."/>
            <person name="Sipes S.D."/>
        </authorList>
    </citation>
    <scope>NUCLEOTIDE SEQUENCE [GENOMIC DNA]</scope>
</reference>
<reference key="2">
    <citation type="journal article" date="2004" name="Mol. Biol. Evol.">
        <title>Chloroplast phylogeny indicates that bryophytes are monophyletic.</title>
        <authorList>
            <person name="Nishiyama T."/>
            <person name="Wolf P.G."/>
            <person name="Kugita M."/>
            <person name="Sinclair R.B."/>
            <person name="Sugita M."/>
            <person name="Sugiura C."/>
            <person name="Wakasugi T."/>
            <person name="Yamada K."/>
            <person name="Yoshinaga K."/>
            <person name="Yamaguchi K."/>
            <person name="Ueda K."/>
            <person name="Hasebe M."/>
        </authorList>
    </citation>
    <scope>NUCLEOTIDE SEQUENCE [LARGE SCALE GENOMIC DNA]</scope>
    <source>
        <strain>Kingyoku</strain>
    </source>
</reference>